<comment type="function">
    <text evidence="1">This protein is one of the two subunits of integration host factor, a specific DNA-binding protein that functions in genetic recombination as well as in transcriptional and translational control.</text>
</comment>
<comment type="subunit">
    <text evidence="1">Heterodimer of an alpha and a beta chain.</text>
</comment>
<comment type="similarity">
    <text evidence="1">Belongs to the bacterial histone-like protein family.</text>
</comment>
<keyword id="KW-0233">DNA recombination</keyword>
<keyword id="KW-0238">DNA-binding</keyword>
<keyword id="KW-1185">Reference proteome</keyword>
<keyword id="KW-0804">Transcription</keyword>
<keyword id="KW-0805">Transcription regulation</keyword>
<keyword id="KW-0810">Translation regulation</keyword>
<protein>
    <recommendedName>
        <fullName evidence="1">Integration host factor subunit alpha</fullName>
        <shortName evidence="1">IHF-alpha</shortName>
    </recommendedName>
</protein>
<proteinExistence type="inferred from homology"/>
<dbReference type="EMBL" id="CP000563">
    <property type="protein sequence ID" value="ABN61381.1"/>
    <property type="molecule type" value="Genomic_DNA"/>
</dbReference>
<dbReference type="RefSeq" id="WP_006081370.1">
    <property type="nucleotide sequence ID" value="NC_009052.1"/>
</dbReference>
<dbReference type="SMR" id="A3D3R8"/>
<dbReference type="STRING" id="325240.Sbal_1875"/>
<dbReference type="GeneID" id="67443386"/>
<dbReference type="KEGG" id="sbl:Sbal_1875"/>
<dbReference type="HOGENOM" id="CLU_105066_1_3_6"/>
<dbReference type="OrthoDB" id="9797747at2"/>
<dbReference type="Proteomes" id="UP000001557">
    <property type="component" value="Chromosome"/>
</dbReference>
<dbReference type="GO" id="GO:0005829">
    <property type="term" value="C:cytosol"/>
    <property type="evidence" value="ECO:0007669"/>
    <property type="project" value="TreeGrafter"/>
</dbReference>
<dbReference type="GO" id="GO:0003677">
    <property type="term" value="F:DNA binding"/>
    <property type="evidence" value="ECO:0007669"/>
    <property type="project" value="UniProtKB-UniRule"/>
</dbReference>
<dbReference type="GO" id="GO:0030527">
    <property type="term" value="F:structural constituent of chromatin"/>
    <property type="evidence" value="ECO:0007669"/>
    <property type="project" value="InterPro"/>
</dbReference>
<dbReference type="GO" id="GO:0006310">
    <property type="term" value="P:DNA recombination"/>
    <property type="evidence" value="ECO:0007669"/>
    <property type="project" value="UniProtKB-UniRule"/>
</dbReference>
<dbReference type="GO" id="GO:0009893">
    <property type="term" value="P:positive regulation of metabolic process"/>
    <property type="evidence" value="ECO:0007669"/>
    <property type="project" value="UniProtKB-ARBA"/>
</dbReference>
<dbReference type="GO" id="GO:0006355">
    <property type="term" value="P:regulation of DNA-templated transcription"/>
    <property type="evidence" value="ECO:0007669"/>
    <property type="project" value="UniProtKB-UniRule"/>
</dbReference>
<dbReference type="GO" id="GO:0006417">
    <property type="term" value="P:regulation of translation"/>
    <property type="evidence" value="ECO:0007669"/>
    <property type="project" value="UniProtKB-UniRule"/>
</dbReference>
<dbReference type="CDD" id="cd13835">
    <property type="entry name" value="IHF_A"/>
    <property type="match status" value="1"/>
</dbReference>
<dbReference type="FunFam" id="4.10.520.10:FF:000002">
    <property type="entry name" value="Integration host factor subunit alpha"/>
    <property type="match status" value="1"/>
</dbReference>
<dbReference type="Gene3D" id="4.10.520.10">
    <property type="entry name" value="IHF-like DNA-binding proteins"/>
    <property type="match status" value="1"/>
</dbReference>
<dbReference type="HAMAP" id="MF_00380">
    <property type="entry name" value="IHF_alpha"/>
    <property type="match status" value="1"/>
</dbReference>
<dbReference type="InterPro" id="IPR000119">
    <property type="entry name" value="Hist_DNA-bd"/>
</dbReference>
<dbReference type="InterPro" id="IPR020816">
    <property type="entry name" value="Histone-like_DNA-bd_CS"/>
</dbReference>
<dbReference type="InterPro" id="IPR010992">
    <property type="entry name" value="IHF-like_DNA-bd_dom_sf"/>
</dbReference>
<dbReference type="InterPro" id="IPR005684">
    <property type="entry name" value="IHF_alpha"/>
</dbReference>
<dbReference type="NCBIfam" id="TIGR00987">
    <property type="entry name" value="himA"/>
    <property type="match status" value="1"/>
</dbReference>
<dbReference type="NCBIfam" id="NF001401">
    <property type="entry name" value="PRK00285.1"/>
    <property type="match status" value="1"/>
</dbReference>
<dbReference type="PANTHER" id="PTHR33175">
    <property type="entry name" value="DNA-BINDING PROTEIN HU"/>
    <property type="match status" value="1"/>
</dbReference>
<dbReference type="PANTHER" id="PTHR33175:SF2">
    <property type="entry name" value="INTEGRATION HOST FACTOR SUBUNIT ALPHA"/>
    <property type="match status" value="1"/>
</dbReference>
<dbReference type="Pfam" id="PF00216">
    <property type="entry name" value="Bac_DNA_binding"/>
    <property type="match status" value="1"/>
</dbReference>
<dbReference type="PRINTS" id="PR01727">
    <property type="entry name" value="DNABINDINGHU"/>
</dbReference>
<dbReference type="SMART" id="SM00411">
    <property type="entry name" value="BHL"/>
    <property type="match status" value="1"/>
</dbReference>
<dbReference type="SUPFAM" id="SSF47729">
    <property type="entry name" value="IHF-like DNA-binding proteins"/>
    <property type="match status" value="1"/>
</dbReference>
<dbReference type="PROSITE" id="PS00045">
    <property type="entry name" value="HISTONE_LIKE"/>
    <property type="match status" value="1"/>
</dbReference>
<accession>A3D3R8</accession>
<evidence type="ECO:0000255" key="1">
    <source>
        <dbReference type="HAMAP-Rule" id="MF_00380"/>
    </source>
</evidence>
<evidence type="ECO:0000256" key="2">
    <source>
        <dbReference type="SAM" id="MobiDB-lite"/>
    </source>
</evidence>
<organism>
    <name type="scientific">Shewanella baltica (strain OS155 / ATCC BAA-1091)</name>
    <dbReference type="NCBI Taxonomy" id="325240"/>
    <lineage>
        <taxon>Bacteria</taxon>
        <taxon>Pseudomonadati</taxon>
        <taxon>Pseudomonadota</taxon>
        <taxon>Gammaproteobacteria</taxon>
        <taxon>Alteromonadales</taxon>
        <taxon>Shewanellaceae</taxon>
        <taxon>Shewanella</taxon>
    </lineage>
</organism>
<reference key="1">
    <citation type="submission" date="2007-02" db="EMBL/GenBank/DDBJ databases">
        <title>Complete sequence of chromosome of Shewanella baltica OS155.</title>
        <authorList>
            <consortium name="US DOE Joint Genome Institute"/>
            <person name="Copeland A."/>
            <person name="Lucas S."/>
            <person name="Lapidus A."/>
            <person name="Barry K."/>
            <person name="Detter J.C."/>
            <person name="Glavina del Rio T."/>
            <person name="Hammon N."/>
            <person name="Israni S."/>
            <person name="Dalin E."/>
            <person name="Tice H."/>
            <person name="Pitluck S."/>
            <person name="Sims D.R."/>
            <person name="Brettin T."/>
            <person name="Bruce D."/>
            <person name="Han C."/>
            <person name="Tapia R."/>
            <person name="Brainard J."/>
            <person name="Schmutz J."/>
            <person name="Larimer F."/>
            <person name="Land M."/>
            <person name="Hauser L."/>
            <person name="Kyrpides N."/>
            <person name="Mikhailova N."/>
            <person name="Brettar I."/>
            <person name="Klappenbach J."/>
            <person name="Konstantinidis K."/>
            <person name="Rodrigues J."/>
            <person name="Tiedje J."/>
            <person name="Richardson P."/>
        </authorList>
    </citation>
    <scope>NUCLEOTIDE SEQUENCE [LARGE SCALE GENOMIC DNA]</scope>
    <source>
        <strain>OS155 / ATCC BAA-1091</strain>
    </source>
</reference>
<name>IHFA_SHEB5</name>
<gene>
    <name evidence="1" type="primary">ihfA</name>
    <name evidence="1" type="synonym">himA</name>
    <name type="ordered locus">Sbal_1875</name>
</gene>
<feature type="chain" id="PRO_1000060568" description="Integration host factor subunit alpha">
    <location>
        <begin position="1"/>
        <end position="98"/>
    </location>
</feature>
<feature type="region of interest" description="Disordered" evidence="2">
    <location>
        <begin position="49"/>
        <end position="70"/>
    </location>
</feature>
<sequence>MALTKAEMAEHLFETLGMNKRVAKEMVESFFEEIRGALESGEQVKLSGFGNFDLRDKNQRPGRNPKTGEDIPISARRVVTFRPGQKLKTRVEAANTGK</sequence>